<protein>
    <recommendedName>
        <fullName evidence="1">Adenine phosphoribosyltransferase</fullName>
        <shortName evidence="1">APRT</shortName>
        <ecNumber evidence="1">2.4.2.7</ecNumber>
    </recommendedName>
</protein>
<evidence type="ECO:0000255" key="1">
    <source>
        <dbReference type="HAMAP-Rule" id="MF_00004"/>
    </source>
</evidence>
<evidence type="ECO:0000305" key="2"/>
<keyword id="KW-0963">Cytoplasm</keyword>
<keyword id="KW-0328">Glycosyltransferase</keyword>
<keyword id="KW-0660">Purine salvage</keyword>
<keyword id="KW-0808">Transferase</keyword>
<comment type="function">
    <text evidence="1">Catalyzes a salvage reaction resulting in the formation of AMP, that is energically less costly than de novo synthesis.</text>
</comment>
<comment type="catalytic activity">
    <reaction evidence="1">
        <text>AMP + diphosphate = 5-phospho-alpha-D-ribose 1-diphosphate + adenine</text>
        <dbReference type="Rhea" id="RHEA:16609"/>
        <dbReference type="ChEBI" id="CHEBI:16708"/>
        <dbReference type="ChEBI" id="CHEBI:33019"/>
        <dbReference type="ChEBI" id="CHEBI:58017"/>
        <dbReference type="ChEBI" id="CHEBI:456215"/>
        <dbReference type="EC" id="2.4.2.7"/>
    </reaction>
</comment>
<comment type="pathway">
    <text evidence="1">Purine metabolism; AMP biosynthesis via salvage pathway; AMP from adenine: step 1/1.</text>
</comment>
<comment type="subunit">
    <text evidence="1">Homodimer.</text>
</comment>
<comment type="subcellular location">
    <subcellularLocation>
        <location evidence="1">Cytoplasm</location>
    </subcellularLocation>
</comment>
<comment type="similarity">
    <text evidence="1">Belongs to the purine/pyrimidine phosphoribosyltransferase family.</text>
</comment>
<comment type="sequence caution" evidence="2">
    <conflict type="erroneous initiation">
        <sequence resource="EMBL-CDS" id="AAN30450"/>
    </conflict>
</comment>
<comment type="sequence caution" evidence="2">
    <conflict type="erroneous initiation">
        <sequence resource="EMBL-CDS" id="AEM18866"/>
    </conflict>
    <text>Extended N-terminus.</text>
</comment>
<gene>
    <name evidence="1" type="primary">apt</name>
    <name type="ordered locus">BR1540</name>
    <name type="ordered locus">BS1330_I1534</name>
</gene>
<sequence length="181" mass="19614">MESGFKVTLKDAIRTIPDYPKPGVQFRDVTTLMGNAQAFRRAVDELVYPYAGNRIDKVAGIEARGFILGGAIAHQLSAGFVPIRKKGKLPRDTVRIAYSLEYGVDEMEMHRDAIEKGERVVLVDDLIATGGTAEAAAKLLLQMGAEIVAACFIIDLPDLGGRKKLEALGLPVRTLVAFEGD</sequence>
<organism>
    <name type="scientific">Brucella suis biovar 1 (strain 1330)</name>
    <dbReference type="NCBI Taxonomy" id="204722"/>
    <lineage>
        <taxon>Bacteria</taxon>
        <taxon>Pseudomonadati</taxon>
        <taxon>Pseudomonadota</taxon>
        <taxon>Alphaproteobacteria</taxon>
        <taxon>Hyphomicrobiales</taxon>
        <taxon>Brucellaceae</taxon>
        <taxon>Brucella/Ochrobactrum group</taxon>
        <taxon>Brucella</taxon>
    </lineage>
</organism>
<accession>P63543</accession>
<accession>G0KC24</accession>
<accession>Q8YIG8</accession>
<feature type="chain" id="PRO_0000149365" description="Adenine phosphoribosyltransferase">
    <location>
        <begin position="1"/>
        <end position="181"/>
    </location>
</feature>
<proteinExistence type="inferred from homology"/>
<name>APT_BRUSU</name>
<dbReference type="EC" id="2.4.2.7" evidence="1"/>
<dbReference type="EMBL" id="AE014291">
    <property type="protein sequence ID" value="AAN30450.1"/>
    <property type="status" value="ALT_INIT"/>
    <property type="molecule type" value="Genomic_DNA"/>
</dbReference>
<dbReference type="EMBL" id="CP002997">
    <property type="protein sequence ID" value="AEM18866.1"/>
    <property type="status" value="ALT_INIT"/>
    <property type="molecule type" value="Genomic_DNA"/>
</dbReference>
<dbReference type="RefSeq" id="WP_002964645.1">
    <property type="nucleotide sequence ID" value="NZ_KN046804.1"/>
</dbReference>
<dbReference type="SMR" id="P63543"/>
<dbReference type="KEGG" id="bms:BR1540"/>
<dbReference type="KEGG" id="bsi:BS1330_I1534"/>
<dbReference type="PATRIC" id="fig|204722.21.peg.1829"/>
<dbReference type="HOGENOM" id="CLU_063339_3_0_5"/>
<dbReference type="PhylomeDB" id="P63543"/>
<dbReference type="UniPathway" id="UPA00588">
    <property type="reaction ID" value="UER00646"/>
</dbReference>
<dbReference type="Proteomes" id="UP000007104">
    <property type="component" value="Chromosome I"/>
</dbReference>
<dbReference type="GO" id="GO:0005737">
    <property type="term" value="C:cytoplasm"/>
    <property type="evidence" value="ECO:0007669"/>
    <property type="project" value="UniProtKB-SubCell"/>
</dbReference>
<dbReference type="GO" id="GO:0002055">
    <property type="term" value="F:adenine binding"/>
    <property type="evidence" value="ECO:0007669"/>
    <property type="project" value="TreeGrafter"/>
</dbReference>
<dbReference type="GO" id="GO:0003999">
    <property type="term" value="F:adenine phosphoribosyltransferase activity"/>
    <property type="evidence" value="ECO:0007669"/>
    <property type="project" value="UniProtKB-UniRule"/>
</dbReference>
<dbReference type="GO" id="GO:0016208">
    <property type="term" value="F:AMP binding"/>
    <property type="evidence" value="ECO:0007669"/>
    <property type="project" value="TreeGrafter"/>
</dbReference>
<dbReference type="GO" id="GO:0006168">
    <property type="term" value="P:adenine salvage"/>
    <property type="evidence" value="ECO:0007669"/>
    <property type="project" value="InterPro"/>
</dbReference>
<dbReference type="GO" id="GO:0044209">
    <property type="term" value="P:AMP salvage"/>
    <property type="evidence" value="ECO:0007669"/>
    <property type="project" value="UniProtKB-UniRule"/>
</dbReference>
<dbReference type="GO" id="GO:0006166">
    <property type="term" value="P:purine ribonucleoside salvage"/>
    <property type="evidence" value="ECO:0007669"/>
    <property type="project" value="UniProtKB-KW"/>
</dbReference>
<dbReference type="CDD" id="cd06223">
    <property type="entry name" value="PRTases_typeI"/>
    <property type="match status" value="1"/>
</dbReference>
<dbReference type="FunFam" id="3.40.50.2020:FF:000021">
    <property type="entry name" value="Adenine phosphoribosyltransferase"/>
    <property type="match status" value="1"/>
</dbReference>
<dbReference type="Gene3D" id="3.40.50.2020">
    <property type="match status" value="1"/>
</dbReference>
<dbReference type="HAMAP" id="MF_00004">
    <property type="entry name" value="Aden_phosphoribosyltr"/>
    <property type="match status" value="1"/>
</dbReference>
<dbReference type="InterPro" id="IPR005764">
    <property type="entry name" value="Ade_phspho_trans"/>
</dbReference>
<dbReference type="InterPro" id="IPR000836">
    <property type="entry name" value="PRibTrfase_dom"/>
</dbReference>
<dbReference type="InterPro" id="IPR029057">
    <property type="entry name" value="PRTase-like"/>
</dbReference>
<dbReference type="InterPro" id="IPR050054">
    <property type="entry name" value="UPRTase/APRTase"/>
</dbReference>
<dbReference type="NCBIfam" id="TIGR01090">
    <property type="entry name" value="apt"/>
    <property type="match status" value="1"/>
</dbReference>
<dbReference type="NCBIfam" id="NF002634">
    <property type="entry name" value="PRK02304.1-3"/>
    <property type="match status" value="1"/>
</dbReference>
<dbReference type="NCBIfam" id="NF002636">
    <property type="entry name" value="PRK02304.1-5"/>
    <property type="match status" value="1"/>
</dbReference>
<dbReference type="PANTHER" id="PTHR32315">
    <property type="entry name" value="ADENINE PHOSPHORIBOSYLTRANSFERASE"/>
    <property type="match status" value="1"/>
</dbReference>
<dbReference type="PANTHER" id="PTHR32315:SF3">
    <property type="entry name" value="ADENINE PHOSPHORIBOSYLTRANSFERASE"/>
    <property type="match status" value="1"/>
</dbReference>
<dbReference type="Pfam" id="PF00156">
    <property type="entry name" value="Pribosyltran"/>
    <property type="match status" value="1"/>
</dbReference>
<dbReference type="SUPFAM" id="SSF53271">
    <property type="entry name" value="PRTase-like"/>
    <property type="match status" value="1"/>
</dbReference>
<dbReference type="PROSITE" id="PS00103">
    <property type="entry name" value="PUR_PYR_PR_TRANSFER"/>
    <property type="match status" value="1"/>
</dbReference>
<reference key="1">
    <citation type="journal article" date="2002" name="Proc. Natl. Acad. Sci. U.S.A.">
        <title>The Brucella suis genome reveals fundamental similarities between animal and plant pathogens and symbionts.</title>
        <authorList>
            <person name="Paulsen I.T."/>
            <person name="Seshadri R."/>
            <person name="Nelson K.E."/>
            <person name="Eisen J.A."/>
            <person name="Heidelberg J.F."/>
            <person name="Read T.D."/>
            <person name="Dodson R.J."/>
            <person name="Umayam L.A."/>
            <person name="Brinkac L.M."/>
            <person name="Beanan M.J."/>
            <person name="Daugherty S.C."/>
            <person name="DeBoy R.T."/>
            <person name="Durkin A.S."/>
            <person name="Kolonay J.F."/>
            <person name="Madupu R."/>
            <person name="Nelson W.C."/>
            <person name="Ayodeji B."/>
            <person name="Kraul M."/>
            <person name="Shetty J."/>
            <person name="Malek J.A."/>
            <person name="Van Aken S.E."/>
            <person name="Riedmuller S."/>
            <person name="Tettelin H."/>
            <person name="Gill S.R."/>
            <person name="White O."/>
            <person name="Salzberg S.L."/>
            <person name="Hoover D.L."/>
            <person name="Lindler L.E."/>
            <person name="Halling S.M."/>
            <person name="Boyle S.M."/>
            <person name="Fraser C.M."/>
        </authorList>
    </citation>
    <scope>NUCLEOTIDE SEQUENCE [LARGE SCALE GENOMIC DNA]</scope>
    <source>
        <strain>1330</strain>
    </source>
</reference>
<reference key="2">
    <citation type="journal article" date="2011" name="J. Bacteriol.">
        <title>Revised genome sequence of Brucella suis 1330.</title>
        <authorList>
            <person name="Tae H."/>
            <person name="Shallom S."/>
            <person name="Settlage R."/>
            <person name="Preston D."/>
            <person name="Adams L.G."/>
            <person name="Garner H.R."/>
        </authorList>
    </citation>
    <scope>NUCLEOTIDE SEQUENCE [LARGE SCALE GENOMIC DNA]</scope>
    <source>
        <strain>1330</strain>
    </source>
</reference>